<sequence length="451" mass="49779">MPGMMEKGPELLGKSRSANGGAKSPAGGGGSSANGGLHFSEPESGCSSDDEHGDVGMRVGAEYQARIPEFDPGATKYTDKDNGGMLVWSPYHSIPDAKLDEYIAIAKEKHGYNVEQALGMLFWHKHNIEKSLADLPNFTPFPDEWTVEDKVLFEQAFSFHGKSFHRIQQMLPDKTIASLVKYYYSWKKTRSRTSLMDRQARKLANRHNQGDSDDDVEEAHPMDGNDSDYDPKKEAKREGNADQPVQTSKIGLGRREYQSLQHRHHSQRSKCRPPKGMYLTQEDVVAVSCSPNAANTILRQLDMELISLKRQVQNAKQVNSALKQKMEGGIEEFKPPEAQTPQAPRTLGPSPPAPSSTPTPTVPIATLNQPPPLLRPTLPAAPALHRQPPPLQQQARFIQPRPTLNQPPPPLIRPANSMPPRLNPRPVLTTVGGQQPPSLIGIQTDSQPSLH</sequence>
<accession>Q6PGA0</accession>
<keyword id="KW-0025">Alternative splicing</keyword>
<keyword id="KW-0175">Coiled coil</keyword>
<keyword id="KW-1017">Isopeptide bond</keyword>
<keyword id="KW-0488">Methylation</keyword>
<keyword id="KW-0539">Nucleus</keyword>
<keyword id="KW-0597">Phosphoprotein</keyword>
<keyword id="KW-1185">Reference proteome</keyword>
<keyword id="KW-0678">Repressor</keyword>
<keyword id="KW-0804">Transcription</keyword>
<keyword id="KW-0805">Transcription regulation</keyword>
<keyword id="KW-0832">Ubl conjugation</keyword>
<protein>
    <recommendedName>
        <fullName>REST corepressor 3</fullName>
    </recommendedName>
</protein>
<name>RCOR3_MOUSE</name>
<gene>
    <name type="primary">Rcor3</name>
</gene>
<comment type="function">
    <text evidence="7">May act as a component of a corepressor complex that represses transcription.</text>
</comment>
<comment type="subcellular location">
    <subcellularLocation>
        <location evidence="3 4">Nucleus</location>
    </subcellularLocation>
</comment>
<comment type="alternative products">
    <event type="alternative splicing"/>
    <isoform>
        <id>Q6PGA0-1</id>
        <name>1</name>
        <sequence type="displayed"/>
    </isoform>
    <isoform>
        <id>Q6PGA0-2</id>
        <name>2</name>
        <sequence type="described" ref="VSP_017463 VSP_017464"/>
    </isoform>
</comment>
<comment type="similarity">
    <text evidence="7">Belongs to the CoREST family.</text>
</comment>
<comment type="sequence caution" evidence="7">
    <conflict type="erroneous initiation">
        <sequence resource="EMBL-CDS" id="AAH57141"/>
    </conflict>
</comment>
<comment type="sequence caution" evidence="7">
    <conflict type="frameshift">
        <sequence resource="EMBL" id="AK135612"/>
    </conflict>
</comment>
<dbReference type="EMBL" id="AK135612">
    <property type="status" value="NOT_ANNOTATED_CDS"/>
    <property type="molecule type" value="mRNA"/>
</dbReference>
<dbReference type="EMBL" id="BC057141">
    <property type="protein sequence ID" value="AAH57141.2"/>
    <property type="status" value="ALT_INIT"/>
    <property type="molecule type" value="mRNA"/>
</dbReference>
<dbReference type="CCDS" id="CCDS69995.1">
    <molecule id="Q6PGA0-1"/>
</dbReference>
<dbReference type="CCDS" id="CCDS69996.1">
    <molecule id="Q6PGA0-2"/>
</dbReference>
<dbReference type="RefSeq" id="NP_001277207.1">
    <molecule id="Q6PGA0-2"/>
    <property type="nucleotide sequence ID" value="NM_001290278.2"/>
</dbReference>
<dbReference type="RefSeq" id="NP_659063.3">
    <molecule id="Q6PGA0-1"/>
    <property type="nucleotide sequence ID" value="NM_144814.4"/>
</dbReference>
<dbReference type="SMR" id="Q6PGA0"/>
<dbReference type="BioGRID" id="229560">
    <property type="interactions" value="2"/>
</dbReference>
<dbReference type="FunCoup" id="Q6PGA0">
    <property type="interactions" value="3324"/>
</dbReference>
<dbReference type="IntAct" id="Q6PGA0">
    <property type="interactions" value="1"/>
</dbReference>
<dbReference type="STRING" id="10090.ENSMUSP00000142054"/>
<dbReference type="GlyGen" id="Q6PGA0">
    <property type="glycosylation" value="1 site"/>
</dbReference>
<dbReference type="iPTMnet" id="Q6PGA0"/>
<dbReference type="PhosphoSitePlus" id="Q6PGA0"/>
<dbReference type="PaxDb" id="10090-ENSMUSP00000073004"/>
<dbReference type="ProteomicsDB" id="300327">
    <molecule id="Q6PGA0-1"/>
</dbReference>
<dbReference type="ProteomicsDB" id="300328">
    <molecule id="Q6PGA0-2"/>
</dbReference>
<dbReference type="Pumba" id="Q6PGA0"/>
<dbReference type="Antibodypedia" id="2380">
    <property type="antibodies" value="109 antibodies from 20 providers"/>
</dbReference>
<dbReference type="DNASU" id="214742"/>
<dbReference type="Ensembl" id="ENSMUST00000073279.13">
    <molecule id="Q6PGA0-1"/>
    <property type="protein sequence ID" value="ENSMUSP00000073004.8"/>
    <property type="gene ID" value="ENSMUSG00000037395.17"/>
</dbReference>
<dbReference type="Ensembl" id="ENSMUST00000110849.10">
    <molecule id="Q6PGA0-2"/>
    <property type="protein sequence ID" value="ENSMUSP00000106473.4"/>
    <property type="gene ID" value="ENSMUSG00000037395.17"/>
</dbReference>
<dbReference type="GeneID" id="214742"/>
<dbReference type="KEGG" id="mmu:214742"/>
<dbReference type="UCSC" id="uc007edh.2">
    <molecule id="Q6PGA0-1"/>
    <property type="organism name" value="mouse"/>
</dbReference>
<dbReference type="UCSC" id="uc007edi.2">
    <molecule id="Q6PGA0-2"/>
    <property type="organism name" value="mouse"/>
</dbReference>
<dbReference type="AGR" id="MGI:2441920"/>
<dbReference type="CTD" id="55758"/>
<dbReference type="MGI" id="MGI:2441920">
    <property type="gene designation" value="Rcor3"/>
</dbReference>
<dbReference type="VEuPathDB" id="HostDB:ENSMUSG00000037395"/>
<dbReference type="eggNOG" id="KOG1194">
    <property type="taxonomic scope" value="Eukaryota"/>
</dbReference>
<dbReference type="GeneTree" id="ENSGT00940000154196"/>
<dbReference type="InParanoid" id="Q6PGA0"/>
<dbReference type="OrthoDB" id="10064338at2759"/>
<dbReference type="PhylomeDB" id="Q6PGA0"/>
<dbReference type="TreeFam" id="TF106450"/>
<dbReference type="BioGRID-ORCS" id="214742">
    <property type="hits" value="3 hits in 59 CRISPR screens"/>
</dbReference>
<dbReference type="ChiTaRS" id="Rcor3">
    <property type="organism name" value="mouse"/>
</dbReference>
<dbReference type="PRO" id="PR:Q6PGA0"/>
<dbReference type="Proteomes" id="UP000000589">
    <property type="component" value="Chromosome 1"/>
</dbReference>
<dbReference type="RNAct" id="Q6PGA0">
    <property type="molecule type" value="protein"/>
</dbReference>
<dbReference type="Bgee" id="ENSMUSG00000037395">
    <property type="expression patterns" value="Expressed in spermatocyte and 72 other cell types or tissues"/>
</dbReference>
<dbReference type="ExpressionAtlas" id="Q6PGA0">
    <property type="expression patterns" value="baseline and differential"/>
</dbReference>
<dbReference type="GO" id="GO:0005634">
    <property type="term" value="C:nucleus"/>
    <property type="evidence" value="ECO:0007669"/>
    <property type="project" value="UniProtKB-SubCell"/>
</dbReference>
<dbReference type="GO" id="GO:0019899">
    <property type="term" value="F:enzyme binding"/>
    <property type="evidence" value="ECO:0000353"/>
    <property type="project" value="MGI"/>
</dbReference>
<dbReference type="FunFam" id="1.10.10.60:FF:000033">
    <property type="entry name" value="REST corepressor 3"/>
    <property type="match status" value="1"/>
</dbReference>
<dbReference type="FunFam" id="1.20.58.1880:FF:000005">
    <property type="entry name" value="REST corepressor 3 isoform X3"/>
    <property type="match status" value="1"/>
</dbReference>
<dbReference type="FunFam" id="4.10.1240.50:FF:000002">
    <property type="entry name" value="REST corepressor isoform X1"/>
    <property type="match status" value="1"/>
</dbReference>
<dbReference type="Gene3D" id="1.20.58.1880">
    <property type="match status" value="1"/>
</dbReference>
<dbReference type="Gene3D" id="4.10.1240.50">
    <property type="match status" value="1"/>
</dbReference>
<dbReference type="Gene3D" id="1.10.10.60">
    <property type="entry name" value="Homeodomain-like"/>
    <property type="match status" value="1"/>
</dbReference>
<dbReference type="InterPro" id="IPR000949">
    <property type="entry name" value="ELM2_dom"/>
</dbReference>
<dbReference type="InterPro" id="IPR009057">
    <property type="entry name" value="Homeodomain-like_sf"/>
</dbReference>
<dbReference type="InterPro" id="IPR049048">
    <property type="entry name" value="REST_helical"/>
</dbReference>
<dbReference type="InterPro" id="IPR001005">
    <property type="entry name" value="SANT/Myb"/>
</dbReference>
<dbReference type="InterPro" id="IPR017884">
    <property type="entry name" value="SANT_dom"/>
</dbReference>
<dbReference type="InterPro" id="IPR051066">
    <property type="entry name" value="Trans_reg/Corepressor"/>
</dbReference>
<dbReference type="PANTHER" id="PTHR16089:SF13">
    <property type="entry name" value="REST COREPRESSOR 3"/>
    <property type="match status" value="1"/>
</dbReference>
<dbReference type="PANTHER" id="PTHR16089">
    <property type="entry name" value="REST COREPRESSOR COREST PROTEIN-RELATED"/>
    <property type="match status" value="1"/>
</dbReference>
<dbReference type="Pfam" id="PF01448">
    <property type="entry name" value="ELM2"/>
    <property type="match status" value="1"/>
</dbReference>
<dbReference type="Pfam" id="PF00249">
    <property type="entry name" value="Myb_DNA-binding"/>
    <property type="match status" value="1"/>
</dbReference>
<dbReference type="Pfam" id="PF20878">
    <property type="entry name" value="REST_helical"/>
    <property type="match status" value="1"/>
</dbReference>
<dbReference type="SMART" id="SM01189">
    <property type="entry name" value="ELM2"/>
    <property type="match status" value="1"/>
</dbReference>
<dbReference type="SMART" id="SM00717">
    <property type="entry name" value="SANT"/>
    <property type="match status" value="1"/>
</dbReference>
<dbReference type="SUPFAM" id="SSF46689">
    <property type="entry name" value="Homeodomain-like"/>
    <property type="match status" value="1"/>
</dbReference>
<dbReference type="PROSITE" id="PS51156">
    <property type="entry name" value="ELM2"/>
    <property type="match status" value="1"/>
</dbReference>
<dbReference type="PROSITE" id="PS51293">
    <property type="entry name" value="SANT"/>
    <property type="match status" value="1"/>
</dbReference>
<organism>
    <name type="scientific">Mus musculus</name>
    <name type="common">Mouse</name>
    <dbReference type="NCBI Taxonomy" id="10090"/>
    <lineage>
        <taxon>Eukaryota</taxon>
        <taxon>Metazoa</taxon>
        <taxon>Chordata</taxon>
        <taxon>Craniata</taxon>
        <taxon>Vertebrata</taxon>
        <taxon>Euteleostomi</taxon>
        <taxon>Mammalia</taxon>
        <taxon>Eutheria</taxon>
        <taxon>Euarchontoglires</taxon>
        <taxon>Glires</taxon>
        <taxon>Rodentia</taxon>
        <taxon>Myomorpha</taxon>
        <taxon>Muroidea</taxon>
        <taxon>Muridae</taxon>
        <taxon>Murinae</taxon>
        <taxon>Mus</taxon>
        <taxon>Mus</taxon>
    </lineage>
</organism>
<proteinExistence type="evidence at protein level"/>
<reference key="1">
    <citation type="journal article" date="2005" name="Science">
        <title>The transcriptional landscape of the mammalian genome.</title>
        <authorList>
            <person name="Carninci P."/>
            <person name="Kasukawa T."/>
            <person name="Katayama S."/>
            <person name="Gough J."/>
            <person name="Frith M.C."/>
            <person name="Maeda N."/>
            <person name="Oyama R."/>
            <person name="Ravasi T."/>
            <person name="Lenhard B."/>
            <person name="Wells C."/>
            <person name="Kodzius R."/>
            <person name="Shimokawa K."/>
            <person name="Bajic V.B."/>
            <person name="Brenner S.E."/>
            <person name="Batalov S."/>
            <person name="Forrest A.R."/>
            <person name="Zavolan M."/>
            <person name="Davis M.J."/>
            <person name="Wilming L.G."/>
            <person name="Aidinis V."/>
            <person name="Allen J.E."/>
            <person name="Ambesi-Impiombato A."/>
            <person name="Apweiler R."/>
            <person name="Aturaliya R.N."/>
            <person name="Bailey T.L."/>
            <person name="Bansal M."/>
            <person name="Baxter L."/>
            <person name="Beisel K.W."/>
            <person name="Bersano T."/>
            <person name="Bono H."/>
            <person name="Chalk A.M."/>
            <person name="Chiu K.P."/>
            <person name="Choudhary V."/>
            <person name="Christoffels A."/>
            <person name="Clutterbuck D.R."/>
            <person name="Crowe M.L."/>
            <person name="Dalla E."/>
            <person name="Dalrymple B.P."/>
            <person name="de Bono B."/>
            <person name="Della Gatta G."/>
            <person name="di Bernardo D."/>
            <person name="Down T."/>
            <person name="Engstrom P."/>
            <person name="Fagiolini M."/>
            <person name="Faulkner G."/>
            <person name="Fletcher C.F."/>
            <person name="Fukushima T."/>
            <person name="Furuno M."/>
            <person name="Futaki S."/>
            <person name="Gariboldi M."/>
            <person name="Georgii-Hemming P."/>
            <person name="Gingeras T.R."/>
            <person name="Gojobori T."/>
            <person name="Green R.E."/>
            <person name="Gustincich S."/>
            <person name="Harbers M."/>
            <person name="Hayashi Y."/>
            <person name="Hensch T.K."/>
            <person name="Hirokawa N."/>
            <person name="Hill D."/>
            <person name="Huminiecki L."/>
            <person name="Iacono M."/>
            <person name="Ikeo K."/>
            <person name="Iwama A."/>
            <person name="Ishikawa T."/>
            <person name="Jakt M."/>
            <person name="Kanapin A."/>
            <person name="Katoh M."/>
            <person name="Kawasawa Y."/>
            <person name="Kelso J."/>
            <person name="Kitamura H."/>
            <person name="Kitano H."/>
            <person name="Kollias G."/>
            <person name="Krishnan S.P."/>
            <person name="Kruger A."/>
            <person name="Kummerfeld S.K."/>
            <person name="Kurochkin I.V."/>
            <person name="Lareau L.F."/>
            <person name="Lazarevic D."/>
            <person name="Lipovich L."/>
            <person name="Liu J."/>
            <person name="Liuni S."/>
            <person name="McWilliam S."/>
            <person name="Madan Babu M."/>
            <person name="Madera M."/>
            <person name="Marchionni L."/>
            <person name="Matsuda H."/>
            <person name="Matsuzawa S."/>
            <person name="Miki H."/>
            <person name="Mignone F."/>
            <person name="Miyake S."/>
            <person name="Morris K."/>
            <person name="Mottagui-Tabar S."/>
            <person name="Mulder N."/>
            <person name="Nakano N."/>
            <person name="Nakauchi H."/>
            <person name="Ng P."/>
            <person name="Nilsson R."/>
            <person name="Nishiguchi S."/>
            <person name="Nishikawa S."/>
            <person name="Nori F."/>
            <person name="Ohara O."/>
            <person name="Okazaki Y."/>
            <person name="Orlando V."/>
            <person name="Pang K.C."/>
            <person name="Pavan W.J."/>
            <person name="Pavesi G."/>
            <person name="Pesole G."/>
            <person name="Petrovsky N."/>
            <person name="Piazza S."/>
            <person name="Reed J."/>
            <person name="Reid J.F."/>
            <person name="Ring B.Z."/>
            <person name="Ringwald M."/>
            <person name="Rost B."/>
            <person name="Ruan Y."/>
            <person name="Salzberg S.L."/>
            <person name="Sandelin A."/>
            <person name="Schneider C."/>
            <person name="Schoenbach C."/>
            <person name="Sekiguchi K."/>
            <person name="Semple C.A."/>
            <person name="Seno S."/>
            <person name="Sessa L."/>
            <person name="Sheng Y."/>
            <person name="Shibata Y."/>
            <person name="Shimada H."/>
            <person name="Shimada K."/>
            <person name="Silva D."/>
            <person name="Sinclair B."/>
            <person name="Sperling S."/>
            <person name="Stupka E."/>
            <person name="Sugiura K."/>
            <person name="Sultana R."/>
            <person name="Takenaka Y."/>
            <person name="Taki K."/>
            <person name="Tammoja K."/>
            <person name="Tan S.L."/>
            <person name="Tang S."/>
            <person name="Taylor M.S."/>
            <person name="Tegner J."/>
            <person name="Teichmann S.A."/>
            <person name="Ueda H.R."/>
            <person name="van Nimwegen E."/>
            <person name="Verardo R."/>
            <person name="Wei C.L."/>
            <person name="Yagi K."/>
            <person name="Yamanishi H."/>
            <person name="Zabarovsky E."/>
            <person name="Zhu S."/>
            <person name="Zimmer A."/>
            <person name="Hide W."/>
            <person name="Bult C."/>
            <person name="Grimmond S.M."/>
            <person name="Teasdale R.D."/>
            <person name="Liu E.T."/>
            <person name="Brusic V."/>
            <person name="Quackenbush J."/>
            <person name="Wahlestedt C."/>
            <person name="Mattick J.S."/>
            <person name="Hume D.A."/>
            <person name="Kai C."/>
            <person name="Sasaki D."/>
            <person name="Tomaru Y."/>
            <person name="Fukuda S."/>
            <person name="Kanamori-Katayama M."/>
            <person name="Suzuki M."/>
            <person name="Aoki J."/>
            <person name="Arakawa T."/>
            <person name="Iida J."/>
            <person name="Imamura K."/>
            <person name="Itoh M."/>
            <person name="Kato T."/>
            <person name="Kawaji H."/>
            <person name="Kawagashira N."/>
            <person name="Kawashima T."/>
            <person name="Kojima M."/>
            <person name="Kondo S."/>
            <person name="Konno H."/>
            <person name="Nakano K."/>
            <person name="Ninomiya N."/>
            <person name="Nishio T."/>
            <person name="Okada M."/>
            <person name="Plessy C."/>
            <person name="Shibata K."/>
            <person name="Shiraki T."/>
            <person name="Suzuki S."/>
            <person name="Tagami M."/>
            <person name="Waki K."/>
            <person name="Watahiki A."/>
            <person name="Okamura-Oho Y."/>
            <person name="Suzuki H."/>
            <person name="Kawai J."/>
            <person name="Hayashizaki Y."/>
        </authorList>
    </citation>
    <scope>NUCLEOTIDE SEQUENCE [LARGE SCALE MRNA] (ISOFORM 2)</scope>
    <source>
        <strain>C57BL/6J</strain>
        <tissue>Adrenal gland</tissue>
    </source>
</reference>
<reference key="2">
    <citation type="journal article" date="2004" name="Genome Res.">
        <title>The status, quality, and expansion of the NIH full-length cDNA project: the Mammalian Gene Collection (MGC).</title>
        <authorList>
            <consortium name="The MGC Project Team"/>
        </authorList>
    </citation>
    <scope>NUCLEOTIDE SEQUENCE [LARGE SCALE MRNA] OF 38-451 (ISOFORM 1)</scope>
    <source>
        <tissue>Mammary tumor</tissue>
    </source>
</reference>
<reference key="3">
    <citation type="journal article" date="2010" name="Cell">
        <title>A tissue-specific atlas of mouse protein phosphorylation and expression.</title>
        <authorList>
            <person name="Huttlin E.L."/>
            <person name="Jedrychowski M.P."/>
            <person name="Elias J.E."/>
            <person name="Goswami T."/>
            <person name="Rad R."/>
            <person name="Beausoleil S.A."/>
            <person name="Villen J."/>
            <person name="Haas W."/>
            <person name="Sowa M.E."/>
            <person name="Gygi S.P."/>
        </authorList>
    </citation>
    <scope>PHOSPHORYLATION [LARGE SCALE ANALYSIS] AT SER-212 AND SER-227</scope>
    <scope>IDENTIFICATION BY MASS SPECTROMETRY [LARGE SCALE ANALYSIS]</scope>
    <source>
        <tissue>Heart</tissue>
        <tissue>Kidney</tissue>
        <tissue>Testis</tissue>
    </source>
</reference>
<reference key="4">
    <citation type="journal article" date="2014" name="Mol. Cell. Proteomics">
        <title>Immunoaffinity enrichment and mass spectrometry analysis of protein methylation.</title>
        <authorList>
            <person name="Guo A."/>
            <person name="Gu H."/>
            <person name="Zhou J."/>
            <person name="Mulhern D."/>
            <person name="Wang Y."/>
            <person name="Lee K.A."/>
            <person name="Yang V."/>
            <person name="Aguiar M."/>
            <person name="Kornhauser J."/>
            <person name="Jia X."/>
            <person name="Ren J."/>
            <person name="Beausoleil S.A."/>
            <person name="Silva J.C."/>
            <person name="Vemulapalli V."/>
            <person name="Bedford M.T."/>
            <person name="Comb M.J."/>
        </authorList>
    </citation>
    <scope>METHYLATION [LARGE SCALE ANALYSIS] AT ARG-401 AND ARG-413</scope>
    <scope>IDENTIFICATION BY MASS SPECTROMETRY [LARGE SCALE ANALYSIS]</scope>
    <source>
        <tissue>Brain</tissue>
        <tissue>Embryo</tissue>
    </source>
</reference>
<evidence type="ECO:0000250" key="1">
    <source>
        <dbReference type="UniProtKB" id="Q9P2K3"/>
    </source>
</evidence>
<evidence type="ECO:0000255" key="2"/>
<evidence type="ECO:0000255" key="3">
    <source>
        <dbReference type="PROSITE-ProRule" id="PRU00512"/>
    </source>
</evidence>
<evidence type="ECO:0000255" key="4">
    <source>
        <dbReference type="PROSITE-ProRule" id="PRU00624"/>
    </source>
</evidence>
<evidence type="ECO:0000256" key="5">
    <source>
        <dbReference type="SAM" id="MobiDB-lite"/>
    </source>
</evidence>
<evidence type="ECO:0000303" key="6">
    <source>
    </source>
</evidence>
<evidence type="ECO:0000305" key="7"/>
<evidence type="ECO:0007744" key="8">
    <source>
    </source>
</evidence>
<evidence type="ECO:0007744" key="9">
    <source>
    </source>
</evidence>
<feature type="chain" id="PRO_0000226782" description="REST corepressor 3">
    <location>
        <begin position="1"/>
        <end position="451"/>
    </location>
</feature>
<feature type="domain" description="ELM2" evidence="3">
    <location>
        <begin position="55"/>
        <end position="139"/>
    </location>
</feature>
<feature type="domain" description="SANT" evidence="4">
    <location>
        <begin position="140"/>
        <end position="191"/>
    </location>
</feature>
<feature type="region of interest" description="Disordered" evidence="5">
    <location>
        <begin position="1"/>
        <end position="55"/>
    </location>
</feature>
<feature type="region of interest" description="Disordered" evidence="5">
    <location>
        <begin position="204"/>
        <end position="275"/>
    </location>
</feature>
<feature type="region of interest" description="Disordered" evidence="5">
    <location>
        <begin position="333"/>
        <end position="451"/>
    </location>
</feature>
<feature type="coiled-coil region" evidence="2">
    <location>
        <begin position="293"/>
        <end position="329"/>
    </location>
</feature>
<feature type="compositionally biased region" description="Basic and acidic residues" evidence="5">
    <location>
        <begin position="218"/>
        <end position="240"/>
    </location>
</feature>
<feature type="compositionally biased region" description="Basic residues" evidence="5">
    <location>
        <begin position="261"/>
        <end position="273"/>
    </location>
</feature>
<feature type="compositionally biased region" description="Pro residues" evidence="5">
    <location>
        <begin position="349"/>
        <end position="361"/>
    </location>
</feature>
<feature type="compositionally biased region" description="Low complexity" evidence="5">
    <location>
        <begin position="375"/>
        <end position="384"/>
    </location>
</feature>
<feature type="compositionally biased region" description="Polar residues" evidence="5">
    <location>
        <begin position="431"/>
        <end position="451"/>
    </location>
</feature>
<feature type="modified residue" description="Phosphoserine" evidence="8">
    <location>
        <position position="212"/>
    </location>
</feature>
<feature type="modified residue" description="Phosphoserine" evidence="8">
    <location>
        <position position="227"/>
    </location>
</feature>
<feature type="modified residue" description="Asymmetric dimethylarginine" evidence="9">
    <location>
        <position position="401"/>
    </location>
</feature>
<feature type="modified residue" description="Asymmetric dimethylarginine" evidence="9">
    <location>
        <position position="413"/>
    </location>
</feature>
<feature type="cross-link" description="Glycyl lysine isopeptide (Lys-Gly) (interchain with G-Cter in SUMO2)" evidence="1">
    <location>
        <position position="76"/>
    </location>
</feature>
<feature type="cross-link" description="Glycyl lysine isopeptide (Lys-Gly) (interchain with G-Cter in SUMO2)" evidence="1">
    <location>
        <position position="249"/>
    </location>
</feature>
<feature type="splice variant" id="VSP_017463" description="In isoform 2." evidence="6">
    <original>AQTPQAPRTLGPSPPAPSSTPTPTVPIATLNQPPPLLRPTLPAAPALHRQPPPLQQQARFIQPRPTLNQPPPPLIRPANSMPPRLNPRPVLTTVGGQ</original>
    <variation>SNQKINARWTTEEQLLAVQGTDPTGSSDSGSITSCPIIHSNTNSPHCHSEPASTTSSSNTACRPCSSPTTSSTPAAGSVHPAPANSQSASSTSHSPC</variation>
    <location>
        <begin position="338"/>
        <end position="434"/>
    </location>
</feature>
<feature type="splice variant" id="VSP_017464" description="In isoform 2." evidence="6">
    <location>
        <begin position="435"/>
        <end position="451"/>
    </location>
</feature>